<dbReference type="EC" id="3.5.3.1" evidence="1"/>
<dbReference type="EMBL" id="U51805">
    <property type="protein sequence ID" value="AAA98611.1"/>
    <property type="molecule type" value="mRNA"/>
</dbReference>
<dbReference type="EMBL" id="AK149471">
    <property type="protein sequence ID" value="BAE28901.1"/>
    <property type="status" value="ALT_INIT"/>
    <property type="molecule type" value="mRNA"/>
</dbReference>
<dbReference type="EMBL" id="AK171417">
    <property type="protein sequence ID" value="BAE42440.1"/>
    <property type="molecule type" value="mRNA"/>
</dbReference>
<dbReference type="EMBL" id="CT010173">
    <property type="protein sequence ID" value="CAJ18381.1"/>
    <property type="molecule type" value="mRNA"/>
</dbReference>
<dbReference type="EMBL" id="BC013341">
    <property type="protein sequence ID" value="AAH13341.1"/>
    <property type="molecule type" value="mRNA"/>
</dbReference>
<dbReference type="EMBL" id="BC050005">
    <property type="protein sequence ID" value="AAH50005.2"/>
    <property type="molecule type" value="mRNA"/>
</dbReference>
<dbReference type="CCDS" id="CCDS48523.1"/>
<dbReference type="RefSeq" id="NP_031508.1">
    <property type="nucleotide sequence ID" value="NM_007482.3"/>
</dbReference>
<dbReference type="SMR" id="Q61176"/>
<dbReference type="BioGRID" id="198190">
    <property type="interactions" value="13"/>
</dbReference>
<dbReference type="FunCoup" id="Q61176">
    <property type="interactions" value="202"/>
</dbReference>
<dbReference type="IntAct" id="Q61176">
    <property type="interactions" value="2"/>
</dbReference>
<dbReference type="MINT" id="Q61176"/>
<dbReference type="STRING" id="10090.ENSMUSP00000020161"/>
<dbReference type="BindingDB" id="Q61176"/>
<dbReference type="ChEMBL" id="CHEMBL4630836"/>
<dbReference type="CarbonylDB" id="Q61176"/>
<dbReference type="GlyGen" id="Q61176">
    <property type="glycosylation" value="1 site, 1 O-linked glycan (1 site)"/>
</dbReference>
<dbReference type="iPTMnet" id="Q61176"/>
<dbReference type="PhosphoSitePlus" id="Q61176"/>
<dbReference type="SwissPalm" id="Q61176"/>
<dbReference type="CPTAC" id="non-CPTAC-3893"/>
<dbReference type="jPOST" id="Q61176"/>
<dbReference type="PaxDb" id="10090-ENSMUSP00000020161"/>
<dbReference type="PeptideAtlas" id="Q61176"/>
<dbReference type="ProteomicsDB" id="283262"/>
<dbReference type="Pumba" id="Q61176"/>
<dbReference type="Antibodypedia" id="779">
    <property type="antibodies" value="1348 antibodies from 51 providers"/>
</dbReference>
<dbReference type="DNASU" id="11846"/>
<dbReference type="Ensembl" id="ENSMUST00000020161.10">
    <property type="protein sequence ID" value="ENSMUSP00000020161.9"/>
    <property type="gene ID" value="ENSMUSG00000019987.10"/>
</dbReference>
<dbReference type="GeneID" id="11846"/>
<dbReference type="KEGG" id="mmu:11846"/>
<dbReference type="UCSC" id="uc007erg.2">
    <property type="organism name" value="mouse"/>
</dbReference>
<dbReference type="AGR" id="MGI:88070"/>
<dbReference type="CTD" id="383"/>
<dbReference type="MGI" id="MGI:88070">
    <property type="gene designation" value="Arg1"/>
</dbReference>
<dbReference type="VEuPathDB" id="HostDB:ENSMUSG00000019987"/>
<dbReference type="eggNOG" id="KOG2965">
    <property type="taxonomic scope" value="Eukaryota"/>
</dbReference>
<dbReference type="GeneTree" id="ENSGT00950000183195"/>
<dbReference type="HOGENOM" id="CLU_039478_6_1_1"/>
<dbReference type="InParanoid" id="Q61176"/>
<dbReference type="OMA" id="FSWMTPC"/>
<dbReference type="OrthoDB" id="9992747at2759"/>
<dbReference type="PhylomeDB" id="Q61176"/>
<dbReference type="TreeFam" id="TF300034"/>
<dbReference type="BRENDA" id="3.5.3.1">
    <property type="organism ID" value="3474"/>
</dbReference>
<dbReference type="Reactome" id="R-MMU-6798695">
    <property type="pathway name" value="Neutrophil degranulation"/>
</dbReference>
<dbReference type="Reactome" id="R-MMU-70635">
    <property type="pathway name" value="Urea cycle"/>
</dbReference>
<dbReference type="SABIO-RK" id="Q61176"/>
<dbReference type="UniPathway" id="UPA00158">
    <property type="reaction ID" value="UER00270"/>
</dbReference>
<dbReference type="BioGRID-ORCS" id="11846">
    <property type="hits" value="1 hit in 77 CRISPR screens"/>
</dbReference>
<dbReference type="ChiTaRS" id="Arg1">
    <property type="organism name" value="mouse"/>
</dbReference>
<dbReference type="PRO" id="PR:Q61176"/>
<dbReference type="Proteomes" id="UP000000589">
    <property type="component" value="Chromosome 10"/>
</dbReference>
<dbReference type="RNAct" id="Q61176">
    <property type="molecule type" value="protein"/>
</dbReference>
<dbReference type="Bgee" id="ENSMUSG00000019987">
    <property type="expression patterns" value="Expressed in left lobe of liver and 157 other cell types or tissues"/>
</dbReference>
<dbReference type="GO" id="GO:0005737">
    <property type="term" value="C:cytoplasm"/>
    <property type="evidence" value="ECO:0007669"/>
    <property type="project" value="UniProtKB-SubCell"/>
</dbReference>
<dbReference type="GO" id="GO:0005615">
    <property type="term" value="C:extracellular space"/>
    <property type="evidence" value="ECO:0007669"/>
    <property type="project" value="Ensembl"/>
</dbReference>
<dbReference type="GO" id="GO:0004053">
    <property type="term" value="F:arginase activity"/>
    <property type="evidence" value="ECO:0000314"/>
    <property type="project" value="MGI"/>
</dbReference>
<dbReference type="GO" id="GO:0046872">
    <property type="term" value="F:metal ion binding"/>
    <property type="evidence" value="ECO:0007669"/>
    <property type="project" value="UniProtKB-KW"/>
</dbReference>
<dbReference type="GO" id="GO:0002250">
    <property type="term" value="P:adaptive immune response"/>
    <property type="evidence" value="ECO:0007669"/>
    <property type="project" value="UniProtKB-KW"/>
</dbReference>
<dbReference type="GO" id="GO:0006525">
    <property type="term" value="P:arginine metabolic process"/>
    <property type="evidence" value="ECO:0007669"/>
    <property type="project" value="UniProtKB-KW"/>
</dbReference>
<dbReference type="GO" id="GO:0042832">
    <property type="term" value="P:defense response to protozoan"/>
    <property type="evidence" value="ECO:0000315"/>
    <property type="project" value="UniProtKB"/>
</dbReference>
<dbReference type="GO" id="GO:0045087">
    <property type="term" value="P:innate immune response"/>
    <property type="evidence" value="ECO:0007669"/>
    <property type="project" value="UniProtKB-KW"/>
</dbReference>
<dbReference type="GO" id="GO:0046007">
    <property type="term" value="P:negative regulation of activated T cell proliferation"/>
    <property type="evidence" value="ECO:0000315"/>
    <property type="project" value="UniProtKB"/>
</dbReference>
<dbReference type="GO" id="GO:2000552">
    <property type="term" value="P:negative regulation of T-helper 2 cell cytokine production"/>
    <property type="evidence" value="ECO:0000315"/>
    <property type="project" value="UniProtKB"/>
</dbReference>
<dbReference type="GO" id="GO:0060336">
    <property type="term" value="P:negative regulation of type II interferon-mediated signaling pathway"/>
    <property type="evidence" value="ECO:0007669"/>
    <property type="project" value="Ensembl"/>
</dbReference>
<dbReference type="GO" id="GO:0070965">
    <property type="term" value="P:positive regulation of neutrophil mediated killing of fungus"/>
    <property type="evidence" value="ECO:0007669"/>
    <property type="project" value="Ensembl"/>
</dbReference>
<dbReference type="GO" id="GO:0009624">
    <property type="term" value="P:response to nematode"/>
    <property type="evidence" value="ECO:0000314"/>
    <property type="project" value="MGI"/>
</dbReference>
<dbReference type="GO" id="GO:0000050">
    <property type="term" value="P:urea cycle"/>
    <property type="evidence" value="ECO:0007669"/>
    <property type="project" value="UniProtKB-UniPathway"/>
</dbReference>
<dbReference type="CDD" id="cd11587">
    <property type="entry name" value="Arginase-like"/>
    <property type="match status" value="1"/>
</dbReference>
<dbReference type="FunFam" id="3.40.800.10:FF:000011">
    <property type="entry name" value="Arginase-1"/>
    <property type="match status" value="1"/>
</dbReference>
<dbReference type="Gene3D" id="3.40.800.10">
    <property type="entry name" value="Ureohydrolase domain"/>
    <property type="match status" value="1"/>
</dbReference>
<dbReference type="InterPro" id="IPR014033">
    <property type="entry name" value="Arginase"/>
</dbReference>
<dbReference type="InterPro" id="IPR006035">
    <property type="entry name" value="Ureohydrolase"/>
</dbReference>
<dbReference type="InterPro" id="IPR023696">
    <property type="entry name" value="Ureohydrolase_dom_sf"/>
</dbReference>
<dbReference type="InterPro" id="IPR020855">
    <property type="entry name" value="Ureohydrolase_Mn_BS"/>
</dbReference>
<dbReference type="NCBIfam" id="TIGR01229">
    <property type="entry name" value="rocF_arginase"/>
    <property type="match status" value="1"/>
</dbReference>
<dbReference type="PANTHER" id="PTHR43782">
    <property type="entry name" value="ARGINASE"/>
    <property type="match status" value="1"/>
</dbReference>
<dbReference type="PANTHER" id="PTHR43782:SF2">
    <property type="entry name" value="ARGINASE-1"/>
    <property type="match status" value="1"/>
</dbReference>
<dbReference type="Pfam" id="PF00491">
    <property type="entry name" value="Arginase"/>
    <property type="match status" value="1"/>
</dbReference>
<dbReference type="PIRSF" id="PIRSF036979">
    <property type="entry name" value="Arginase"/>
    <property type="match status" value="1"/>
</dbReference>
<dbReference type="PRINTS" id="PR00116">
    <property type="entry name" value="ARGINASE"/>
</dbReference>
<dbReference type="SUPFAM" id="SSF52768">
    <property type="entry name" value="Arginase/deacetylase"/>
    <property type="match status" value="1"/>
</dbReference>
<dbReference type="PROSITE" id="PS01053">
    <property type="entry name" value="ARGINASE_1"/>
    <property type="match status" value="1"/>
</dbReference>
<dbReference type="PROSITE" id="PS51409">
    <property type="entry name" value="ARGINASE_2"/>
    <property type="match status" value="1"/>
</dbReference>
<comment type="function">
    <text evidence="16">Key element of the urea cycle converting L-arginine to urea and L-ornithine, which is further metabolized into metabolites proline and polyamides that drive collagen synthesis and bioenergetic pathways critical for cell proliferation, respectively; the urea cycle takes place primarily in the liver and, to a lesser extent, in the kidneys.</text>
</comment>
<comment type="function">
    <text evidence="1 7 8 9 10 11 12 13 14 15">Functions in L-arginine homeostasis in nonhepatic tissues characterized by the competition between nitric oxide synthase (NOS) and arginase for the available intracellular substrate arginine. Arginine metabolism is a critical regulator of innate and adaptive immune responses. Involved in an antimicrobial effector pathway in polymorphonuclear granulocytes (PMN). Upon PMN cell death is liberated from the phagolysosome and depletes arginine in the microenvironment leading to suppressed T cell and natural killer (NK) cell proliferation and cytokine secretion (By similarity). In group 2 innate lymphoid cells (ILC2s) promotes acute type 2 inflammation in the lung and is involved in optimal ILC2 proliferation but not survival (PubMed:27043409). Plays a role in the immune response of alternatively activated or M2 macrophages in processes such as wound healing and tissue regeneration, immune defense against multicellular pathogens and parasites, and immune suppression and allergic inflammation; the regulatory outcome seems to be organ specific (PubMed:19360123, PubMed:20483789, PubMed:23552798, PubMed:23637937, PubMed:7537672). In tumor-infiltrating dendritic cells (DCs) and myeloid-derived suppressor cells (MDSCs) plays a role in suppression of T cell-mediated antitumor immunity (PubMed:19414774, PubMed:23248265).</text>
</comment>
<comment type="catalytic activity">
    <reaction evidence="1">
        <text>L-arginine + H2O = urea + L-ornithine</text>
        <dbReference type="Rhea" id="RHEA:20569"/>
        <dbReference type="ChEBI" id="CHEBI:15377"/>
        <dbReference type="ChEBI" id="CHEBI:16199"/>
        <dbReference type="ChEBI" id="CHEBI:32682"/>
        <dbReference type="ChEBI" id="CHEBI:46911"/>
        <dbReference type="EC" id="3.5.3.1"/>
    </reaction>
</comment>
<comment type="cofactor">
    <cofactor evidence="4">
        <name>Mn(2+)</name>
        <dbReference type="ChEBI" id="CHEBI:29035"/>
    </cofactor>
    <text evidence="4">Binds 2 manganese ions per subunit.</text>
</comment>
<comment type="pathway">
    <text evidence="1">Nitrogen metabolism; urea cycle; L-ornithine and urea from L-arginine: step 1/1.</text>
</comment>
<comment type="subunit">
    <text evidence="1">Homotrimer (By similarity). Interacts with CMTM6 (By similarity).</text>
</comment>
<comment type="subcellular location">
    <subcellularLocation>
        <location evidence="1">Cytoplasm</location>
    </subcellularLocation>
    <subcellularLocation>
        <location evidence="1">Cytoplasmic granule</location>
    </subcellularLocation>
</comment>
<comment type="tissue specificity">
    <text evidence="6 8 9 14 15">Expressed in macrophages (PubMed:12193690, PubMed:19360123, PubMed:7537672). Expressed in precursor and mature group 2 innate lymphoid cells (ILC2s) (PubMed:27043409). Expressed in lung tumor-associated myeloid cells (PubMed:15313928). Expressed in lung tumor-infiltrating dendritic cells (PubMed:19414774).</text>
</comment>
<comment type="induction">
    <text evidence="6 9 15">By T helper 2 (Th2) cytokines such as IL-4, IL-13 and IL-10. In tumor-infiltrating dendritic cells by prostaglandin E2.</text>
</comment>
<comment type="similarity">
    <text evidence="4">Belongs to the arginase family.</text>
</comment>
<comment type="sequence caution" evidence="16">
    <conflict type="erroneous initiation">
        <sequence resource="EMBL-CDS" id="BAE28901"/>
    </conflict>
</comment>
<proteinExistence type="evidence at protein level"/>
<accession>Q61176</accession>
<accession>Q3TB74</accession>
<accession>Q3UEL0</accession>
<accession>Q4FK78</accession>
<accession>Q80VI4</accession>
<organism>
    <name type="scientific">Mus musculus</name>
    <name type="common">Mouse</name>
    <dbReference type="NCBI Taxonomy" id="10090"/>
    <lineage>
        <taxon>Eukaryota</taxon>
        <taxon>Metazoa</taxon>
        <taxon>Chordata</taxon>
        <taxon>Craniata</taxon>
        <taxon>Vertebrata</taxon>
        <taxon>Euteleostomi</taxon>
        <taxon>Mammalia</taxon>
        <taxon>Eutheria</taxon>
        <taxon>Euarchontoglires</taxon>
        <taxon>Glires</taxon>
        <taxon>Rodentia</taxon>
        <taxon>Myomorpha</taxon>
        <taxon>Muroidea</taxon>
        <taxon>Muridae</taxon>
        <taxon>Murinae</taxon>
        <taxon>Mus</taxon>
        <taxon>Mus</taxon>
    </lineage>
</organism>
<keyword id="KW-1064">Adaptive immunity</keyword>
<keyword id="KW-0056">Arginine metabolism</keyword>
<keyword id="KW-0963">Cytoplasm</keyword>
<keyword id="KW-0378">Hydrolase</keyword>
<keyword id="KW-0391">Immunity</keyword>
<keyword id="KW-0399">Innate immunity</keyword>
<keyword id="KW-0464">Manganese</keyword>
<keyword id="KW-0479">Metal-binding</keyword>
<keyword id="KW-0597">Phosphoprotein</keyword>
<keyword id="KW-1185">Reference proteome</keyword>
<keyword id="KW-0835">Urea cycle</keyword>
<name>ARGI1_MOUSE</name>
<protein>
    <recommendedName>
        <fullName>Arginase-1</fullName>
        <ecNumber evidence="1">3.5.3.1</ecNumber>
    </recommendedName>
    <alternativeName>
        <fullName>Liver-type arginase</fullName>
    </alternativeName>
    <alternativeName>
        <fullName>Type I arginase</fullName>
    </alternativeName>
</protein>
<sequence length="323" mass="34808">MSSKPKSLEIIGAPFSKGQPRGGVEKGPAALRKAGLLEKLKETEYDVRDHGDLAFVDVPNDSSFQIVKNPRSVGKANEELAGVVAEVQKNGRVSVVLGGDHSLAVGSISGHARVHPDLCVIWVDAHTDINTPLTTSSGNLHGQPVSFLLKELKGKFPDVPGFSWVTPCISAKDIVYIGLRDVDPGEHYIIKTLGIKYFSMTEVDKLGIGKVMEETFSYLLGRKKRPIHLSFDVDGLDPAFTPATGTPVLGGLSYREGLYITEEIYKTGLLSGLDIMEVNPTLGKTAEEVKSTVNTAVALTLACFGTQREGNHKPGTDYLKPPK</sequence>
<feature type="chain" id="PRO_0000173694" description="Arginase-1">
    <location>
        <begin position="1"/>
        <end position="323"/>
    </location>
</feature>
<feature type="region of interest" description="Disordered" evidence="5">
    <location>
        <begin position="1"/>
        <end position="27"/>
    </location>
</feature>
<feature type="binding site" evidence="4">
    <location>
        <position position="101"/>
    </location>
    <ligand>
        <name>Mn(2+)</name>
        <dbReference type="ChEBI" id="CHEBI:29035"/>
        <label>1</label>
    </ligand>
</feature>
<feature type="binding site" evidence="4">
    <location>
        <position position="124"/>
    </location>
    <ligand>
        <name>Mn(2+)</name>
        <dbReference type="ChEBI" id="CHEBI:29035"/>
        <label>1</label>
    </ligand>
</feature>
<feature type="binding site" evidence="4">
    <location>
        <position position="124"/>
    </location>
    <ligand>
        <name>Mn(2+)</name>
        <dbReference type="ChEBI" id="CHEBI:29035"/>
        <label>2</label>
    </ligand>
</feature>
<feature type="binding site" evidence="1">
    <location>
        <begin position="126"/>
        <end position="130"/>
    </location>
    <ligand>
        <name>substrate</name>
    </ligand>
</feature>
<feature type="binding site" evidence="4">
    <location>
        <position position="126"/>
    </location>
    <ligand>
        <name>Mn(2+)</name>
        <dbReference type="ChEBI" id="CHEBI:29035"/>
        <label>2</label>
    </ligand>
</feature>
<feature type="binding site" evidence="4">
    <location>
        <position position="128"/>
    </location>
    <ligand>
        <name>Mn(2+)</name>
        <dbReference type="ChEBI" id="CHEBI:29035"/>
        <label>1</label>
    </ligand>
</feature>
<feature type="binding site" evidence="1">
    <location>
        <begin position="137"/>
        <end position="139"/>
    </location>
    <ligand>
        <name>substrate</name>
    </ligand>
</feature>
<feature type="binding site" evidence="1">
    <location>
        <position position="183"/>
    </location>
    <ligand>
        <name>substrate</name>
    </ligand>
</feature>
<feature type="binding site" evidence="4">
    <location>
        <position position="232"/>
    </location>
    <ligand>
        <name>Mn(2+)</name>
        <dbReference type="ChEBI" id="CHEBI:29035"/>
        <label>1</label>
    </ligand>
</feature>
<feature type="binding site" evidence="4">
    <location>
        <position position="232"/>
    </location>
    <ligand>
        <name>Mn(2+)</name>
        <dbReference type="ChEBI" id="CHEBI:29035"/>
        <label>2</label>
    </ligand>
</feature>
<feature type="binding site" evidence="4">
    <location>
        <position position="234"/>
    </location>
    <ligand>
        <name>Mn(2+)</name>
        <dbReference type="ChEBI" id="CHEBI:29035"/>
        <label>2</label>
    </ligand>
</feature>
<feature type="binding site" evidence="2">
    <location>
        <position position="246"/>
    </location>
    <ligand>
        <name>substrate</name>
    </ligand>
</feature>
<feature type="binding site" evidence="3">
    <location>
        <position position="277"/>
    </location>
    <ligand>
        <name>substrate</name>
    </ligand>
</feature>
<feature type="modified residue" description="Phosphoserine" evidence="17 18">
    <location>
        <position position="7"/>
    </location>
</feature>
<feature type="modified residue" description="N6-succinyllysine" evidence="19">
    <location>
        <position position="17"/>
    </location>
</feature>
<feature type="modified residue" description="Phosphoserine" evidence="1">
    <location>
        <position position="62"/>
    </location>
</feature>
<feature type="modified residue" description="Phosphoserine" evidence="17">
    <location>
        <position position="72"/>
    </location>
</feature>
<feature type="modified residue" description="N6-succinyllysine" evidence="19">
    <location>
        <position position="75"/>
    </location>
</feature>
<feature type="modified residue" description="Phosphoserine" evidence="18">
    <location>
        <position position="163"/>
    </location>
</feature>
<feature type="modified residue" description="Phosphoserine" evidence="1">
    <location>
        <position position="217"/>
    </location>
</feature>
<feature type="modified residue" description="Phosphothreonine" evidence="17 18">
    <location>
        <position position="281"/>
    </location>
</feature>
<feature type="sequence conflict" description="In Ref. 2; BAE28901." evidence="16" ref="2">
    <original>S</original>
    <variation>T</variation>
    <location>
        <position position="109"/>
    </location>
</feature>
<feature type="sequence conflict" description="In Ref. 3; CAJ18381." evidence="16" ref="3">
    <original>T</original>
    <variation>A</variation>
    <location>
        <position position="306"/>
    </location>
</feature>
<reference key="1">
    <citation type="submission" date="1996-03" db="EMBL/GenBank/DDBJ databases">
        <authorList>
            <person name="Chieko H."/>
        </authorList>
    </citation>
    <scope>NUCLEOTIDE SEQUENCE [MRNA]</scope>
    <source>
        <strain>C57BL/6 X CBA</strain>
        <tissue>Liver</tissue>
    </source>
</reference>
<reference key="2">
    <citation type="journal article" date="2005" name="Science">
        <title>The transcriptional landscape of the mammalian genome.</title>
        <authorList>
            <person name="Carninci P."/>
            <person name="Kasukawa T."/>
            <person name="Katayama S."/>
            <person name="Gough J."/>
            <person name="Frith M.C."/>
            <person name="Maeda N."/>
            <person name="Oyama R."/>
            <person name="Ravasi T."/>
            <person name="Lenhard B."/>
            <person name="Wells C."/>
            <person name="Kodzius R."/>
            <person name="Shimokawa K."/>
            <person name="Bajic V.B."/>
            <person name="Brenner S.E."/>
            <person name="Batalov S."/>
            <person name="Forrest A.R."/>
            <person name="Zavolan M."/>
            <person name="Davis M.J."/>
            <person name="Wilming L.G."/>
            <person name="Aidinis V."/>
            <person name="Allen J.E."/>
            <person name="Ambesi-Impiombato A."/>
            <person name="Apweiler R."/>
            <person name="Aturaliya R.N."/>
            <person name="Bailey T.L."/>
            <person name="Bansal M."/>
            <person name="Baxter L."/>
            <person name="Beisel K.W."/>
            <person name="Bersano T."/>
            <person name="Bono H."/>
            <person name="Chalk A.M."/>
            <person name="Chiu K.P."/>
            <person name="Choudhary V."/>
            <person name="Christoffels A."/>
            <person name="Clutterbuck D.R."/>
            <person name="Crowe M.L."/>
            <person name="Dalla E."/>
            <person name="Dalrymple B.P."/>
            <person name="de Bono B."/>
            <person name="Della Gatta G."/>
            <person name="di Bernardo D."/>
            <person name="Down T."/>
            <person name="Engstrom P."/>
            <person name="Fagiolini M."/>
            <person name="Faulkner G."/>
            <person name="Fletcher C.F."/>
            <person name="Fukushima T."/>
            <person name="Furuno M."/>
            <person name="Futaki S."/>
            <person name="Gariboldi M."/>
            <person name="Georgii-Hemming P."/>
            <person name="Gingeras T.R."/>
            <person name="Gojobori T."/>
            <person name="Green R.E."/>
            <person name="Gustincich S."/>
            <person name="Harbers M."/>
            <person name="Hayashi Y."/>
            <person name="Hensch T.K."/>
            <person name="Hirokawa N."/>
            <person name="Hill D."/>
            <person name="Huminiecki L."/>
            <person name="Iacono M."/>
            <person name="Ikeo K."/>
            <person name="Iwama A."/>
            <person name="Ishikawa T."/>
            <person name="Jakt M."/>
            <person name="Kanapin A."/>
            <person name="Katoh M."/>
            <person name="Kawasawa Y."/>
            <person name="Kelso J."/>
            <person name="Kitamura H."/>
            <person name="Kitano H."/>
            <person name="Kollias G."/>
            <person name="Krishnan S.P."/>
            <person name="Kruger A."/>
            <person name="Kummerfeld S.K."/>
            <person name="Kurochkin I.V."/>
            <person name="Lareau L.F."/>
            <person name="Lazarevic D."/>
            <person name="Lipovich L."/>
            <person name="Liu J."/>
            <person name="Liuni S."/>
            <person name="McWilliam S."/>
            <person name="Madan Babu M."/>
            <person name="Madera M."/>
            <person name="Marchionni L."/>
            <person name="Matsuda H."/>
            <person name="Matsuzawa S."/>
            <person name="Miki H."/>
            <person name="Mignone F."/>
            <person name="Miyake S."/>
            <person name="Morris K."/>
            <person name="Mottagui-Tabar S."/>
            <person name="Mulder N."/>
            <person name="Nakano N."/>
            <person name="Nakauchi H."/>
            <person name="Ng P."/>
            <person name="Nilsson R."/>
            <person name="Nishiguchi S."/>
            <person name="Nishikawa S."/>
            <person name="Nori F."/>
            <person name="Ohara O."/>
            <person name="Okazaki Y."/>
            <person name="Orlando V."/>
            <person name="Pang K.C."/>
            <person name="Pavan W.J."/>
            <person name="Pavesi G."/>
            <person name="Pesole G."/>
            <person name="Petrovsky N."/>
            <person name="Piazza S."/>
            <person name="Reed J."/>
            <person name="Reid J.F."/>
            <person name="Ring B.Z."/>
            <person name="Ringwald M."/>
            <person name="Rost B."/>
            <person name="Ruan Y."/>
            <person name="Salzberg S.L."/>
            <person name="Sandelin A."/>
            <person name="Schneider C."/>
            <person name="Schoenbach C."/>
            <person name="Sekiguchi K."/>
            <person name="Semple C.A."/>
            <person name="Seno S."/>
            <person name="Sessa L."/>
            <person name="Sheng Y."/>
            <person name="Shibata Y."/>
            <person name="Shimada H."/>
            <person name="Shimada K."/>
            <person name="Silva D."/>
            <person name="Sinclair B."/>
            <person name="Sperling S."/>
            <person name="Stupka E."/>
            <person name="Sugiura K."/>
            <person name="Sultana R."/>
            <person name="Takenaka Y."/>
            <person name="Taki K."/>
            <person name="Tammoja K."/>
            <person name="Tan S.L."/>
            <person name="Tang S."/>
            <person name="Taylor M.S."/>
            <person name="Tegner J."/>
            <person name="Teichmann S.A."/>
            <person name="Ueda H.R."/>
            <person name="van Nimwegen E."/>
            <person name="Verardo R."/>
            <person name="Wei C.L."/>
            <person name="Yagi K."/>
            <person name="Yamanishi H."/>
            <person name="Zabarovsky E."/>
            <person name="Zhu S."/>
            <person name="Zimmer A."/>
            <person name="Hide W."/>
            <person name="Bult C."/>
            <person name="Grimmond S.M."/>
            <person name="Teasdale R.D."/>
            <person name="Liu E.T."/>
            <person name="Brusic V."/>
            <person name="Quackenbush J."/>
            <person name="Wahlestedt C."/>
            <person name="Mattick J.S."/>
            <person name="Hume D.A."/>
            <person name="Kai C."/>
            <person name="Sasaki D."/>
            <person name="Tomaru Y."/>
            <person name="Fukuda S."/>
            <person name="Kanamori-Katayama M."/>
            <person name="Suzuki M."/>
            <person name="Aoki J."/>
            <person name="Arakawa T."/>
            <person name="Iida J."/>
            <person name="Imamura K."/>
            <person name="Itoh M."/>
            <person name="Kato T."/>
            <person name="Kawaji H."/>
            <person name="Kawagashira N."/>
            <person name="Kawashima T."/>
            <person name="Kojima M."/>
            <person name="Kondo S."/>
            <person name="Konno H."/>
            <person name="Nakano K."/>
            <person name="Ninomiya N."/>
            <person name="Nishio T."/>
            <person name="Okada M."/>
            <person name="Plessy C."/>
            <person name="Shibata K."/>
            <person name="Shiraki T."/>
            <person name="Suzuki S."/>
            <person name="Tagami M."/>
            <person name="Waki K."/>
            <person name="Watahiki A."/>
            <person name="Okamura-Oho Y."/>
            <person name="Suzuki H."/>
            <person name="Kawai J."/>
            <person name="Hayashizaki Y."/>
        </authorList>
    </citation>
    <scope>NUCLEOTIDE SEQUENCE [LARGE SCALE MRNA]</scope>
    <source>
        <strain>C57BL/6J</strain>
        <tissue>Liver</tissue>
    </source>
</reference>
<reference key="3">
    <citation type="submission" date="2005-07" db="EMBL/GenBank/DDBJ databases">
        <title>Cloning of mouse full open reading frames in Gateway(R) system entry vector (pDONR201).</title>
        <authorList>
            <person name="Ebert L."/>
            <person name="Muenstermann E."/>
            <person name="Schatten R."/>
            <person name="Henze S."/>
            <person name="Bohn E."/>
            <person name="Mollenhauer J."/>
            <person name="Wiemann S."/>
            <person name="Schick M."/>
            <person name="Korn B."/>
        </authorList>
    </citation>
    <scope>NUCLEOTIDE SEQUENCE [LARGE SCALE MRNA]</scope>
</reference>
<reference key="4">
    <citation type="journal article" date="2004" name="Genome Res.">
        <title>The status, quality, and expansion of the NIH full-length cDNA project: the Mammalian Gene Collection (MGC).</title>
        <authorList>
            <consortium name="The MGC Project Team"/>
        </authorList>
    </citation>
    <scope>NUCLEOTIDE SEQUENCE [LARGE SCALE MRNA]</scope>
    <source>
        <strain>FVB/N</strain>
        <tissue>Liver</tissue>
        <tissue>Mammary gland</tissue>
    </source>
</reference>
<reference key="5">
    <citation type="journal article" date="1995" name="Eur. J. Immunol.">
        <title>Reciprocal regulation of the nitric oxide synthase/arginase balance in mouse bone marrow-derived macrophages by TH1 and TH2 cytokines.</title>
        <authorList>
            <person name="Modolell M."/>
            <person name="Corraliza I.M."/>
            <person name="Link F."/>
            <person name="Soler G."/>
            <person name="Eichmann K."/>
        </authorList>
    </citation>
    <scope>FUNCTION IN ALTERNATIVELY ACTIVATED MACROPHAGES</scope>
    <scope>TISSUE SPECIFICITY</scope>
    <scope>INDUCTION</scope>
</reference>
<reference key="6">
    <citation type="journal article" date="2002" name="J. Immunol.">
        <title>Shaping gene expression in activated and resting primary macrophages by IL-10.</title>
        <authorList>
            <person name="Lang R."/>
            <person name="Patel D."/>
            <person name="Morris J.J."/>
            <person name="Rutschman R.L."/>
            <person name="Murray P.J."/>
        </authorList>
    </citation>
    <scope>TISSUE SPECIFICITY</scope>
    <scope>INDUCTION</scope>
</reference>
<reference key="7">
    <citation type="journal article" date="2004" name="Cancer Res.">
        <title>Arginase I production in the tumor microenvironment by mature myeloid cells inhibits T-cell receptor expression and antigen-specific T-cell responses.</title>
        <authorList>
            <person name="Rodriguez P.C."/>
            <person name="Quiceno D.G."/>
            <person name="Zabaleta J."/>
            <person name="Ortiz B."/>
            <person name="Zea A.H."/>
            <person name="Piazuelo M.B."/>
            <person name="Delgado A."/>
            <person name="Correa P."/>
            <person name="Brayer J."/>
            <person name="Sotomayor E.M."/>
            <person name="Antonia S."/>
            <person name="Ochoa J.B."/>
            <person name="Ochoa A.C."/>
        </authorList>
    </citation>
    <scope>FUNCTION IN MYELOID-DERIVED SUPPRESSOR CELLS</scope>
    <scope>TISSUE SPECIFICITY</scope>
</reference>
<reference key="8">
    <citation type="journal article" date="2007" name="Proc. Natl. Acad. Sci. U.S.A.">
        <title>Large-scale phosphorylation analysis of mouse liver.</title>
        <authorList>
            <person name="Villen J."/>
            <person name="Beausoleil S.A."/>
            <person name="Gerber S.A."/>
            <person name="Gygi S.P."/>
        </authorList>
    </citation>
    <scope>PHOSPHORYLATION [LARGE SCALE ANALYSIS] AT SER-7; SER-72 AND THR-281</scope>
    <scope>IDENTIFICATION BY MASS SPECTROMETRY [LARGE SCALE ANALYSIS]</scope>
    <source>
        <tissue>Liver</tissue>
    </source>
</reference>
<reference key="9">
    <citation type="journal article" date="2009" name="J. Immunol.">
        <title>Tumor-educated CD11bhighIalow regulatory dendritic cells suppress T cell response through arginase I.</title>
        <authorList>
            <person name="Liu Q."/>
            <person name="Zhang C."/>
            <person name="Sun A."/>
            <person name="Zheng Y."/>
            <person name="Wang L."/>
            <person name="Cao X."/>
        </authorList>
    </citation>
    <scope>FUNCTION IN TUMOR-INFILTRATING DENDRITIC CELLS</scope>
    <scope>INDUCTION</scope>
    <scope>TISSUE SPECIFICITY</scope>
</reference>
<reference key="10">
    <citation type="journal article" date="2009" name="PLoS Pathog.">
        <title>Arginase-1-expressing macrophages suppress Th2 cytokine-driven inflammation and fibrosis.</title>
        <authorList>
            <person name="Pesce J.T."/>
            <person name="Ramalingam T.R."/>
            <person name="Mentink-Kane M.M."/>
            <person name="Wilson M.S."/>
            <person name="El Kasmi K.C."/>
            <person name="Smith A.M."/>
            <person name="Thompson R.W."/>
            <person name="Cheever A.W."/>
            <person name="Murray P.J."/>
            <person name="Wynn T.A."/>
        </authorList>
    </citation>
    <scope>FUNCTION IN ALTERNATIVELY ACTIVATED MACROPHAGES</scope>
    <scope>TISSUE SPECIFICITY</scope>
</reference>
<reference key="11">
    <citation type="journal article" date="2010" name="Cell">
        <title>A tissue-specific atlas of mouse protein phosphorylation and expression.</title>
        <authorList>
            <person name="Huttlin E.L."/>
            <person name="Jedrychowski M.P."/>
            <person name="Elias J.E."/>
            <person name="Goswami T."/>
            <person name="Rad R."/>
            <person name="Beausoleil S.A."/>
            <person name="Villen J."/>
            <person name="Haas W."/>
            <person name="Sowa M.E."/>
            <person name="Gygi S.P."/>
        </authorList>
    </citation>
    <scope>PHOSPHORYLATION [LARGE SCALE ANALYSIS] AT SER-7; SER-163 AND THR-281</scope>
    <scope>IDENTIFICATION BY MASS SPECTROMETRY [LARGE SCALE ANALYSIS]</scope>
    <source>
        <tissue>Kidney</tissue>
        <tissue>Liver</tissue>
        <tissue>Lung</tissue>
    </source>
</reference>
<reference key="12">
    <citation type="journal article" date="2010" name="J. Immunol.">
        <title>Arginase I suppresses IL-12/IL-23p40-driven intestinal inflammation during acute schistosomiasis.</title>
        <authorList>
            <person name="Herbert D.R."/>
            <person name="Orekov T."/>
            <person name="Roloson A."/>
            <person name="Ilies M."/>
            <person name="Perkins C."/>
            <person name="O'Brien W."/>
            <person name="Cederbaum S."/>
            <person name="Christianson D.W."/>
            <person name="Zimmermann N."/>
            <person name="Rothenberg M.E."/>
            <person name="Finkelman F.D."/>
        </authorList>
    </citation>
    <scope>FUNCTION IN ALTERNATIVELY ACTIVATED MACROPHAGES</scope>
</reference>
<reference key="13">
    <citation type="journal article" date="2013" name="J. Immunol.">
        <title>The key role of IL-6-arginase cascade for inducing dendritic cell-dependent CD4(+) T cell dysfunction in tumor-bearing mice.</title>
        <authorList>
            <person name="Narita Y."/>
            <person name="Kitamura H."/>
            <person name="Wakita D."/>
            <person name="Sumida K."/>
            <person name="Masuko K."/>
            <person name="Terada S."/>
            <person name="Nakano K."/>
            <person name="Nishimura T."/>
        </authorList>
    </citation>
    <scope>FUNCTION IN TUMOR-INFILTRATING DENDRITIC CELLS</scope>
</reference>
<reference key="14">
    <citation type="journal article" date="2013" name="J. Invest. Dermatol.">
        <title>Local arginase 1 activity is required for cutaneous wound healing.</title>
        <authorList>
            <person name="Campbell L."/>
            <person name="Saville C.R."/>
            <person name="Murray P.J."/>
            <person name="Cruickshank S.M."/>
            <person name="Hardman M.J."/>
        </authorList>
    </citation>
    <scope>FUNCTION IN WOUND HEALING</scope>
</reference>
<reference key="15">
    <citation type="journal article" date="2013" name="Mol. Cell">
        <title>SIRT5-mediated lysine desuccinylation impacts diverse metabolic pathways.</title>
        <authorList>
            <person name="Park J."/>
            <person name="Chen Y."/>
            <person name="Tishkoff D.X."/>
            <person name="Peng C."/>
            <person name="Tan M."/>
            <person name="Dai L."/>
            <person name="Xie Z."/>
            <person name="Zhang Y."/>
            <person name="Zwaans B.M."/>
            <person name="Skinner M.E."/>
            <person name="Lombard D.B."/>
            <person name="Zhao Y."/>
        </authorList>
    </citation>
    <scope>SUCCINYLATION [LARGE SCALE ANALYSIS] AT LYS-17 AND LYS-75</scope>
    <scope>IDENTIFICATION BY MASS SPECTROMETRY [LARGE SCALE ANALYSIS]</scope>
    <source>
        <tissue>Liver</tissue>
    </source>
</reference>
<reference key="16">
    <citation type="journal article" date="2013" name="PLoS ONE">
        <title>Role of arginase 1 from myeloid cells in th2-dominated lung inflammation.</title>
        <authorList>
            <person name="Barron L."/>
            <person name="Smith A.M."/>
            <person name="El Kasmi K.C."/>
            <person name="Qualls J.E."/>
            <person name="Huang X."/>
            <person name="Cheever A."/>
            <person name="Borthwick L.A."/>
            <person name="Wilson M.S."/>
            <person name="Murray P.J."/>
            <person name="Wynn T.A."/>
        </authorList>
    </citation>
    <scope>FUNCTION IN ALTERNATIVELY ACTIVATED MACROPHAGES</scope>
</reference>
<reference key="17">
    <citation type="journal article" date="2016" name="Nat. Immunol.">
        <title>Arginase 1 is an innate lymphoid-cell-intrinsic metabolic checkpoint controlling type 2 inflammation.</title>
        <authorList>
            <person name="Monticelli L.A."/>
            <person name="Buck M.D."/>
            <person name="Flamar A.L."/>
            <person name="Saenz S.A."/>
            <person name="Tait Wojno E.D."/>
            <person name="Yudanin N.A."/>
            <person name="Osborne L.C."/>
            <person name="Hepworth M.R."/>
            <person name="Tran S.V."/>
            <person name="Rodewald H.R."/>
            <person name="Shah H."/>
            <person name="Cross J.R."/>
            <person name="Diamond J.M."/>
            <person name="Cantu E."/>
            <person name="Christie J.D."/>
            <person name="Pearce E.L."/>
            <person name="Artis D."/>
        </authorList>
    </citation>
    <scope>FUNCTION</scope>
    <scope>TISSUE SPECIFICITY</scope>
</reference>
<evidence type="ECO:0000250" key="1">
    <source>
        <dbReference type="UniProtKB" id="P05089"/>
    </source>
</evidence>
<evidence type="ECO:0000250" key="2">
    <source>
        <dbReference type="UniProtKB" id="P53608"/>
    </source>
</evidence>
<evidence type="ECO:0000250" key="3">
    <source>
        <dbReference type="UniProtKB" id="P78540"/>
    </source>
</evidence>
<evidence type="ECO:0000255" key="4">
    <source>
        <dbReference type="PROSITE-ProRule" id="PRU00742"/>
    </source>
</evidence>
<evidence type="ECO:0000256" key="5">
    <source>
        <dbReference type="SAM" id="MobiDB-lite"/>
    </source>
</evidence>
<evidence type="ECO:0000269" key="6">
    <source>
    </source>
</evidence>
<evidence type="ECO:0000269" key="7">
    <source>
    </source>
</evidence>
<evidence type="ECO:0000269" key="8">
    <source>
    </source>
</evidence>
<evidence type="ECO:0000269" key="9">
    <source>
    </source>
</evidence>
<evidence type="ECO:0000269" key="10">
    <source>
    </source>
</evidence>
<evidence type="ECO:0000269" key="11">
    <source>
    </source>
</evidence>
<evidence type="ECO:0000269" key="12">
    <source>
    </source>
</evidence>
<evidence type="ECO:0000269" key="13">
    <source>
    </source>
</evidence>
<evidence type="ECO:0000269" key="14">
    <source>
    </source>
</evidence>
<evidence type="ECO:0000269" key="15">
    <source>
    </source>
</evidence>
<evidence type="ECO:0000305" key="16"/>
<evidence type="ECO:0007744" key="17">
    <source>
    </source>
</evidence>
<evidence type="ECO:0007744" key="18">
    <source>
    </source>
</evidence>
<evidence type="ECO:0007744" key="19">
    <source>
    </source>
</evidence>
<gene>
    <name type="primary">Arg1</name>
</gene>